<accession>Q3YWX2</accession>
<evidence type="ECO:0000255" key="1">
    <source>
        <dbReference type="HAMAP-Rule" id="MF_00182"/>
    </source>
</evidence>
<gene>
    <name evidence="1" type="primary">fmt</name>
    <name type="ordered locus">SSON_3428</name>
</gene>
<proteinExistence type="inferred from homology"/>
<dbReference type="EC" id="2.1.2.9" evidence="1"/>
<dbReference type="EMBL" id="CP000038">
    <property type="protein sequence ID" value="AAZ89990.1"/>
    <property type="molecule type" value="Genomic_DNA"/>
</dbReference>
<dbReference type="RefSeq" id="WP_000004476.1">
    <property type="nucleotide sequence ID" value="NC_007384.1"/>
</dbReference>
<dbReference type="SMR" id="Q3YWX2"/>
<dbReference type="GeneID" id="93778700"/>
<dbReference type="KEGG" id="ssn:SSON_3428"/>
<dbReference type="HOGENOM" id="CLU_033347_1_2_6"/>
<dbReference type="Proteomes" id="UP000002529">
    <property type="component" value="Chromosome"/>
</dbReference>
<dbReference type="GO" id="GO:0005829">
    <property type="term" value="C:cytosol"/>
    <property type="evidence" value="ECO:0007669"/>
    <property type="project" value="TreeGrafter"/>
</dbReference>
<dbReference type="GO" id="GO:0004479">
    <property type="term" value="F:methionyl-tRNA formyltransferase activity"/>
    <property type="evidence" value="ECO:0007669"/>
    <property type="project" value="UniProtKB-UniRule"/>
</dbReference>
<dbReference type="CDD" id="cd08646">
    <property type="entry name" value="FMT_core_Met-tRNA-FMT_N"/>
    <property type="match status" value="1"/>
</dbReference>
<dbReference type="CDD" id="cd08704">
    <property type="entry name" value="Met_tRNA_FMT_C"/>
    <property type="match status" value="1"/>
</dbReference>
<dbReference type="FunFam" id="3.10.25.10:FF:000001">
    <property type="entry name" value="Methionyl-tRNA formyltransferase"/>
    <property type="match status" value="1"/>
</dbReference>
<dbReference type="FunFam" id="3.40.50.170:FF:000003">
    <property type="entry name" value="Methionyl-tRNA formyltransferase"/>
    <property type="match status" value="1"/>
</dbReference>
<dbReference type="Gene3D" id="3.10.25.10">
    <property type="entry name" value="Formyl transferase, C-terminal domain"/>
    <property type="match status" value="1"/>
</dbReference>
<dbReference type="Gene3D" id="3.40.50.170">
    <property type="entry name" value="Formyl transferase, N-terminal domain"/>
    <property type="match status" value="1"/>
</dbReference>
<dbReference type="HAMAP" id="MF_00182">
    <property type="entry name" value="Formyl_trans"/>
    <property type="match status" value="1"/>
</dbReference>
<dbReference type="InterPro" id="IPR005794">
    <property type="entry name" value="Fmt"/>
</dbReference>
<dbReference type="InterPro" id="IPR005793">
    <property type="entry name" value="Formyl_trans_C"/>
</dbReference>
<dbReference type="InterPro" id="IPR037022">
    <property type="entry name" value="Formyl_trans_C_sf"/>
</dbReference>
<dbReference type="InterPro" id="IPR002376">
    <property type="entry name" value="Formyl_transf_N"/>
</dbReference>
<dbReference type="InterPro" id="IPR036477">
    <property type="entry name" value="Formyl_transf_N_sf"/>
</dbReference>
<dbReference type="InterPro" id="IPR011034">
    <property type="entry name" value="Formyl_transferase-like_C_sf"/>
</dbReference>
<dbReference type="InterPro" id="IPR001555">
    <property type="entry name" value="GART_AS"/>
</dbReference>
<dbReference type="InterPro" id="IPR044135">
    <property type="entry name" value="Met-tRNA-FMT_C"/>
</dbReference>
<dbReference type="InterPro" id="IPR041711">
    <property type="entry name" value="Met-tRNA-FMT_N"/>
</dbReference>
<dbReference type="NCBIfam" id="TIGR00460">
    <property type="entry name" value="fmt"/>
    <property type="match status" value="1"/>
</dbReference>
<dbReference type="PANTHER" id="PTHR11138">
    <property type="entry name" value="METHIONYL-TRNA FORMYLTRANSFERASE"/>
    <property type="match status" value="1"/>
</dbReference>
<dbReference type="PANTHER" id="PTHR11138:SF5">
    <property type="entry name" value="METHIONYL-TRNA FORMYLTRANSFERASE, MITOCHONDRIAL"/>
    <property type="match status" value="1"/>
</dbReference>
<dbReference type="Pfam" id="PF02911">
    <property type="entry name" value="Formyl_trans_C"/>
    <property type="match status" value="1"/>
</dbReference>
<dbReference type="Pfam" id="PF00551">
    <property type="entry name" value="Formyl_trans_N"/>
    <property type="match status" value="1"/>
</dbReference>
<dbReference type="SUPFAM" id="SSF50486">
    <property type="entry name" value="FMT C-terminal domain-like"/>
    <property type="match status" value="1"/>
</dbReference>
<dbReference type="SUPFAM" id="SSF53328">
    <property type="entry name" value="Formyltransferase"/>
    <property type="match status" value="1"/>
</dbReference>
<dbReference type="PROSITE" id="PS00373">
    <property type="entry name" value="GART"/>
    <property type="match status" value="1"/>
</dbReference>
<keyword id="KW-0648">Protein biosynthesis</keyword>
<keyword id="KW-1185">Reference proteome</keyword>
<keyword id="KW-0808">Transferase</keyword>
<name>FMT_SHISS</name>
<protein>
    <recommendedName>
        <fullName evidence="1">Methionyl-tRNA formyltransferase</fullName>
        <ecNumber evidence="1">2.1.2.9</ecNumber>
    </recommendedName>
</protein>
<feature type="chain" id="PRO_1000020165" description="Methionyl-tRNA formyltransferase">
    <location>
        <begin position="1"/>
        <end position="315"/>
    </location>
</feature>
<feature type="binding site" evidence="1">
    <location>
        <begin position="113"/>
        <end position="116"/>
    </location>
    <ligand>
        <name>(6S)-5,6,7,8-tetrahydrofolate</name>
        <dbReference type="ChEBI" id="CHEBI:57453"/>
    </ligand>
</feature>
<sequence length="315" mass="34099">MSESLRIIFAGTPDFAARHLDALLSSGHNVVGVFTQPDRPAGRGKKLMPSPVKVLAEEKGLPVFQPVSLRPQESQQLVADLQADVMVVVAYGLILPKAVLEMPRLGCINVHGSLLPRWRGAAPIQRSLWAGDAETGVTIMQMDVGLDTGDMLYKLSCPITAEDTSGTLYDKLAELGPQGLITTLKQLADGTAKPEVQDETLVTYAEKLSKEEARIDWSLSAAQLERCIRAFNPWPMSWLEIEGQPVKVWKASVIDTATNAAPGTILEANKQGIQVATGDGILNLLSLQPAGKKAMSAQDLLNSRREWFVPGNRLA</sequence>
<organism>
    <name type="scientific">Shigella sonnei (strain Ss046)</name>
    <dbReference type="NCBI Taxonomy" id="300269"/>
    <lineage>
        <taxon>Bacteria</taxon>
        <taxon>Pseudomonadati</taxon>
        <taxon>Pseudomonadota</taxon>
        <taxon>Gammaproteobacteria</taxon>
        <taxon>Enterobacterales</taxon>
        <taxon>Enterobacteriaceae</taxon>
        <taxon>Shigella</taxon>
    </lineage>
</organism>
<reference key="1">
    <citation type="journal article" date="2005" name="Nucleic Acids Res.">
        <title>Genome dynamics and diversity of Shigella species, the etiologic agents of bacillary dysentery.</title>
        <authorList>
            <person name="Yang F."/>
            <person name="Yang J."/>
            <person name="Zhang X."/>
            <person name="Chen L."/>
            <person name="Jiang Y."/>
            <person name="Yan Y."/>
            <person name="Tang X."/>
            <person name="Wang J."/>
            <person name="Xiong Z."/>
            <person name="Dong J."/>
            <person name="Xue Y."/>
            <person name="Zhu Y."/>
            <person name="Xu X."/>
            <person name="Sun L."/>
            <person name="Chen S."/>
            <person name="Nie H."/>
            <person name="Peng J."/>
            <person name="Xu J."/>
            <person name="Wang Y."/>
            <person name="Yuan Z."/>
            <person name="Wen Y."/>
            <person name="Yao Z."/>
            <person name="Shen Y."/>
            <person name="Qiang B."/>
            <person name="Hou Y."/>
            <person name="Yu J."/>
            <person name="Jin Q."/>
        </authorList>
    </citation>
    <scope>NUCLEOTIDE SEQUENCE [LARGE SCALE GENOMIC DNA]</scope>
    <source>
        <strain>Ss046</strain>
    </source>
</reference>
<comment type="function">
    <text evidence="1">Attaches a formyl group to the free amino group of methionyl-tRNA(fMet). The formyl group appears to play a dual role in the initiator identity of N-formylmethionyl-tRNA by promoting its recognition by IF2 and preventing the misappropriation of this tRNA by the elongation apparatus.</text>
</comment>
<comment type="catalytic activity">
    <reaction evidence="1">
        <text>L-methionyl-tRNA(fMet) + (6R)-10-formyltetrahydrofolate = N-formyl-L-methionyl-tRNA(fMet) + (6S)-5,6,7,8-tetrahydrofolate + H(+)</text>
        <dbReference type="Rhea" id="RHEA:24380"/>
        <dbReference type="Rhea" id="RHEA-COMP:9952"/>
        <dbReference type="Rhea" id="RHEA-COMP:9953"/>
        <dbReference type="ChEBI" id="CHEBI:15378"/>
        <dbReference type="ChEBI" id="CHEBI:57453"/>
        <dbReference type="ChEBI" id="CHEBI:78530"/>
        <dbReference type="ChEBI" id="CHEBI:78844"/>
        <dbReference type="ChEBI" id="CHEBI:195366"/>
        <dbReference type="EC" id="2.1.2.9"/>
    </reaction>
</comment>
<comment type="similarity">
    <text evidence="1">Belongs to the Fmt family.</text>
</comment>